<proteinExistence type="evidence at protein level"/>
<organism>
    <name type="scientific">Gallus gallus</name>
    <name type="common">Chicken</name>
    <dbReference type="NCBI Taxonomy" id="9031"/>
    <lineage>
        <taxon>Eukaryota</taxon>
        <taxon>Metazoa</taxon>
        <taxon>Chordata</taxon>
        <taxon>Craniata</taxon>
        <taxon>Vertebrata</taxon>
        <taxon>Euteleostomi</taxon>
        <taxon>Archelosauria</taxon>
        <taxon>Archosauria</taxon>
        <taxon>Dinosauria</taxon>
        <taxon>Saurischia</taxon>
        <taxon>Theropoda</taxon>
        <taxon>Coelurosauria</taxon>
        <taxon>Aves</taxon>
        <taxon>Neognathae</taxon>
        <taxon>Galloanserae</taxon>
        <taxon>Galliformes</taxon>
        <taxon>Phasianidae</taxon>
        <taxon>Phasianinae</taxon>
        <taxon>Gallus</taxon>
    </lineage>
</organism>
<feature type="signal peptide" evidence="2">
    <location>
        <begin position="1"/>
        <end position="36"/>
    </location>
</feature>
<feature type="chain" id="PRO_0000000062" description="Ovostatin">
    <location>
        <begin position="37"/>
        <end position="1473"/>
    </location>
</feature>
<feature type="glycosylation site" description="N-linked (GlcNAc...) asparagine" evidence="1">
    <location>
        <position position="67"/>
    </location>
</feature>
<feature type="glycosylation site" description="N-linked (GlcNAc...) asparagine" evidence="1">
    <location>
        <position position="82"/>
    </location>
</feature>
<feature type="glycosylation site" description="N-linked (GlcNAc...) asparagine" evidence="1">
    <location>
        <position position="89"/>
    </location>
</feature>
<feature type="glycosylation site" description="N-linked (GlcNAc...) asparagine" evidence="1">
    <location>
        <position position="191"/>
    </location>
</feature>
<feature type="glycosylation site" description="N-linked (GlcNAc...) asparagine" evidence="1">
    <location>
        <position position="342"/>
    </location>
</feature>
<feature type="glycosylation site" description="N-linked (GlcNAc...) asparagine" evidence="1">
    <location>
        <position position="403"/>
    </location>
</feature>
<feature type="glycosylation site" description="N-linked (GlcNAc...) asparagine" evidence="1">
    <location>
        <position position="527"/>
    </location>
</feature>
<feature type="glycosylation site" description="N-linked (GlcNAc...) asparagine" evidence="1">
    <location>
        <position position="588"/>
    </location>
</feature>
<feature type="glycosylation site" description="N-linked (GlcNAc...) asparagine" evidence="1">
    <location>
        <position position="757"/>
    </location>
</feature>
<feature type="glycosylation site" description="N-linked (GlcNAc...) asparagine" evidence="1">
    <location>
        <position position="1141"/>
    </location>
</feature>
<feature type="glycosylation site" description="N-linked (GlcNAc...) asparagine" evidence="1">
    <location>
        <position position="1221"/>
    </location>
</feature>
<feature type="glycosylation site" description="N-linked (GlcNAc...) asparagine" evidence="1">
    <location>
        <position position="1315"/>
    </location>
</feature>
<feature type="glycosylation site" description="N-linked (GlcNAc...) asparagine" evidence="1">
    <location>
        <position position="1347"/>
    </location>
</feature>
<feature type="sequence conflict" description="In Ref. 2; AA sequence." evidence="3" ref="2">
    <original>M</original>
    <variation>V</variation>
    <location>
        <position position="46"/>
    </location>
</feature>
<feature type="sequence conflict" description="In Ref. 3; AA sequence." evidence="3" ref="3">
    <original>THHVK</original>
    <variation>IHTVA</variation>
    <location>
        <begin position="718"/>
        <end position="722"/>
    </location>
</feature>
<feature type="sequence conflict" description="In Ref. 3; AA sequence." evidence="3" ref="3">
    <original>E</original>
    <variation>L</variation>
    <location>
        <position position="743"/>
    </location>
</feature>
<keyword id="KW-0082">Bait region</keyword>
<keyword id="KW-0903">Direct protein sequencing</keyword>
<keyword id="KW-1015">Disulfide bond</keyword>
<keyword id="KW-0325">Glycoprotein</keyword>
<keyword id="KW-0646">Protease inhibitor</keyword>
<keyword id="KW-1185">Reference proteome</keyword>
<keyword id="KW-0964">Secreted</keyword>
<keyword id="KW-0722">Serine protease inhibitor</keyword>
<keyword id="KW-0732">Signal</keyword>
<accession>P20740</accession>
<evidence type="ECO:0000255" key="1"/>
<evidence type="ECO:0000269" key="2">
    <source>
    </source>
</evidence>
<evidence type="ECO:0000305" key="3"/>
<sequence length="1473" mass="166355">MHCFLGREILSFFCLTVRKMWLKFILAILLLHAAAGKEPEPQYVLMVPAVLQSDSPSQVCLQFFNLNQTISVRVVLEYDTINTTIFEKNTTTSNGLQCLNFMIPPVTSVSLAFISFTAKGTTFDLKERRSVMIWNMESFVFVQTDKPIYKPGQSVMFRVVALDFNFKPVQEMYPLIAVQDPQNNRIFQWQNVTSEINIVQIEFPLTEEPILGNYKIIVTKKSGERTSHSFLVEEYVLPKFDVTVTAPGSLTVMDSELTVKICAVYTYGQPVEGKVQLSVCRDFDSYGRCKKSPVCQSFTKDLDTDGCLSHILSSKVFELNRIGYKRNLDVKAIVTEKEQVCNLTATQSISITQVMSSLQFENVDHHYRRGIPYFGQIKLVDKDNSPISNKVIQLFVNNKNTHNFTTDINGIAPFSIDTSKIFDPELSLKALYKTSDQCHSEGWIEPSYPDASLSVQRLYSWTSSFVRIEPLWKDMSCGQKRMITVYYILNTEGYEHINIVNFYYVGMAKGKIVLTGEIKVNIQADQNGTFMIPLVVNEKMAPALRLLVYMLHPAKELVADSVRFSIEKCFKNKVQLQFSEKQMLTTSNVSLVIEAAANSFCAVRAVDKSMLLLKSETELSAETIYNLHPIQDLQGYIFNGLNLEDDPQDPCVSSDDIFHKGLYYRPLTSGLGPDVYQFLRDMGMKFFTNSKIRQPTVCTRETVRPPSYFLNAGFTASTHHVKLSAEVAREERGKRHILETIREFFPETWIWDIILINSTGKASVSYTIPDTITEWKASAFCVEELAGFGMSVPATLTAFQPFFVDLTLPYSIIHGEDFLVRANVFNYLNHCIKINVLLLESLDYQAKLISPEDDGCVCAKIRKSYVWNIFPKGTGDVLFSITAETNDDEACEEEALRNIRIDYRDTQIRALLVEPEGIRREETQNFLICMKDDVISQDVAIDLPTNVVEGSPRPSFSVVGDIMGTAIQNVHQLLQMPFGNGEQNMVLFAPNIYVLDYLDKTRQLSEDVKSKTIGYLVSGYQKQLSYKHPDGSYSTFGIRDKEGNTWLTAFVYKSFAEASRFIYIDDNVQAQTLIWLATKQKTDGCFQSTGILVNNAMKGGVENELSLSAYITIALLEAGHSMSHTVIRNAFYCLETASEKNITDIYTQALVAYAFCLAGKAEICESFLRELQKSAKEVDGSKYWEQNQRSAPEKSHLLDHVQSTDVEITSYVLLALLYKPNRSQEDLTKASAIVQWIIRQQNSYGGFASMQDTVVALQALAAYGAATYNSVTQNVIKINSKNTFEKVFTVNNENRLLLQQTPLPQVPGKYSLTVNGTGCVLIQTALRYNIHLPEGAFGFSLSVQTSNASCPRDQPGKFDIVLISSYTGKRSSSNMVIIDVKMLSGFVPVKSSLDQLIDDHTVMQVEYKKNHVLLYLGNILQKRRKEVTFSVEQDFVVTHPKPAPVQIYDYYETEEYAVAEYMSLCRGVVEEMG</sequence>
<comment type="function">
    <text>Is able to inhibit all four classes of proteinases by a unique 'trapping' mechanism. This protein has a peptide stretch, called the 'bait region' which contains specific cleavage sites for different proteinases. When a proteinase cleaves the bait region, a conformational change is induced in the protein which traps the proteinase. The entrapped enzyme remains active against low molecular weight substrates (activity against high molecular weight substrates is greatly reduced).</text>
</comment>
<comment type="subunit">
    <text>Homotetramer, which consists of two pairs of disulfide-linked chains.</text>
</comment>
<comment type="subcellular location">
    <subcellularLocation>
        <location>Secreted</location>
    </subcellularLocation>
</comment>
<comment type="PTM">
    <text>Lacks the thioester bond found in other members of this family.</text>
</comment>
<comment type="PTM">
    <text>Glycosylated; contains 56 glucosamine units per subunit.</text>
</comment>
<comment type="similarity">
    <text evidence="3">Belongs to the protease inhibitor I39 (alpha-2-macroglobulin) family.</text>
</comment>
<comment type="sequence caution" evidence="3">
    <conflict type="erroneous initiation">
        <sequence resource="EMBL-CDS" id="CAA55385"/>
    </conflict>
</comment>
<reference key="1">
    <citation type="journal article" date="1994" name="DNA Seq.">
        <title>Amino acid sequence of hen ovomacroglobulin (ovostatin) deduced from cloned cDNA.</title>
        <authorList>
            <person name="Nielsen K.L."/>
            <person name="Sottrup-Jensen L."/>
            <person name="Nagase H."/>
            <person name="Thoegersen H.C."/>
            <person name="Etzerodt M."/>
        </authorList>
    </citation>
    <scope>NUCLEOTIDE SEQUENCE [MRNA]</scope>
    <source>
        <tissue>Oviduct</tissue>
    </source>
</reference>
<reference key="2">
    <citation type="journal article" date="1983" name="J. Biol. Chem.">
        <title>Ovostatin: a novel proteinase inhibitor from chicken egg white. I. Purification, physicochemical properties, and tissue distribution of ovostatin.</title>
        <authorList>
            <person name="Nagase H."/>
            <person name="Harris E.D. Jr."/>
            <person name="Woessner J.F."/>
            <person name="Brew K."/>
        </authorList>
    </citation>
    <scope>PROTEIN SEQUENCE OF 37-49</scope>
    <source>
        <tissue>Egg white</tissue>
    </source>
</reference>
<reference key="3">
    <citation type="journal article" date="1989" name="J. Biol. Chem.">
        <title>Interaction of human rheumatoid synovial collagenase (matrix metalloproteinase 1) and stromelysin (matrix metalloproteinase 3) with human alpha 2-macroglobulin and chicken ovostatin. Binding kinetics and identification of matrix metalloproteinase cleavage sites.</title>
        <authorList>
            <person name="Enghild J.J."/>
            <person name="Salvesen G."/>
            <person name="Brew K."/>
            <person name="Nagase H."/>
        </authorList>
    </citation>
    <scope>PROTEIN SEQUENCE OF 710-743</scope>
</reference>
<reference key="4">
    <citation type="journal article" date="1993" name="Biochim. Biophys. Acta">
        <title>Evidence from sequence analysis that hen egg-white ovomacroglobulin (ovostatin) is devoid of an internal beta-Cys-gamma-Glu thiol ester.</title>
        <authorList>
            <person name="Nielsen K.L."/>
            <person name="Sottrup-Jensen L."/>
        </authorList>
    </citation>
    <scope>PROTEIN SEQUENCE OF 976-1028</scope>
    <source>
        <tissue>Egg white</tissue>
    </source>
</reference>
<dbReference type="EMBL" id="X78801">
    <property type="protein sequence ID" value="CAA55384.1"/>
    <property type="molecule type" value="mRNA"/>
</dbReference>
<dbReference type="EMBL" id="X78801">
    <property type="protein sequence ID" value="CAA55385.1"/>
    <property type="status" value="ALT_INIT"/>
    <property type="molecule type" value="mRNA"/>
</dbReference>
<dbReference type="PIR" id="I50671">
    <property type="entry name" value="A20872"/>
</dbReference>
<dbReference type="SMR" id="P20740"/>
<dbReference type="FunCoup" id="P20740">
    <property type="interactions" value="2"/>
</dbReference>
<dbReference type="STRING" id="9031.ENSGALP00000047323"/>
<dbReference type="MEROPS" id="I39.002"/>
<dbReference type="GlyGen" id="P20740">
    <property type="glycosylation" value="13 sites"/>
</dbReference>
<dbReference type="PaxDb" id="9031-ENSGALP00000036402"/>
<dbReference type="VEuPathDB" id="HostDB:geneid_396151"/>
<dbReference type="eggNOG" id="KOG1366">
    <property type="taxonomic scope" value="Eukaryota"/>
</dbReference>
<dbReference type="InParanoid" id="P20740"/>
<dbReference type="PhylomeDB" id="P20740"/>
<dbReference type="PRO" id="PR:P20740"/>
<dbReference type="Proteomes" id="UP000000539">
    <property type="component" value="Unassembled WGS sequence"/>
</dbReference>
<dbReference type="GO" id="GO:0005615">
    <property type="term" value="C:extracellular space"/>
    <property type="evidence" value="ECO:0007669"/>
    <property type="project" value="InterPro"/>
</dbReference>
<dbReference type="GO" id="GO:0004867">
    <property type="term" value="F:serine-type endopeptidase inhibitor activity"/>
    <property type="evidence" value="ECO:0007669"/>
    <property type="project" value="UniProtKB-KW"/>
</dbReference>
<dbReference type="CDD" id="cd02897">
    <property type="entry name" value="A2M_2"/>
    <property type="match status" value="1"/>
</dbReference>
<dbReference type="FunFam" id="1.50.10.20:FF:000001">
    <property type="entry name" value="CD109 isoform 1"/>
    <property type="match status" value="1"/>
</dbReference>
<dbReference type="FunFam" id="2.60.40.1930:FF:000001">
    <property type="entry name" value="CD109 isoform 3"/>
    <property type="match status" value="1"/>
</dbReference>
<dbReference type="Gene3D" id="1.50.10.20">
    <property type="match status" value="1"/>
</dbReference>
<dbReference type="Gene3D" id="2.20.130.20">
    <property type="match status" value="2"/>
</dbReference>
<dbReference type="Gene3D" id="2.60.120.1540">
    <property type="match status" value="1"/>
</dbReference>
<dbReference type="Gene3D" id="2.60.40.1930">
    <property type="match status" value="2"/>
</dbReference>
<dbReference type="Gene3D" id="2.60.40.1940">
    <property type="match status" value="1"/>
</dbReference>
<dbReference type="Gene3D" id="2.60.40.690">
    <property type="entry name" value="Alpha-macroglobulin, receptor-binding domain"/>
    <property type="match status" value="1"/>
</dbReference>
<dbReference type="Gene3D" id="2.60.40.10">
    <property type="entry name" value="Immunoglobulins"/>
    <property type="match status" value="2"/>
</dbReference>
<dbReference type="InterPro" id="IPR009048">
    <property type="entry name" value="A-macroglobulin_rcpt-bd"/>
</dbReference>
<dbReference type="InterPro" id="IPR036595">
    <property type="entry name" value="A-macroglobulin_rcpt-bd_sf"/>
</dbReference>
<dbReference type="InterPro" id="IPR050473">
    <property type="entry name" value="A2M/Complement_sys"/>
</dbReference>
<dbReference type="InterPro" id="IPR011625">
    <property type="entry name" value="A2M_N_BRD"/>
</dbReference>
<dbReference type="InterPro" id="IPR041813">
    <property type="entry name" value="A2M_TED"/>
</dbReference>
<dbReference type="InterPro" id="IPR047565">
    <property type="entry name" value="Alpha-macroglob_thiol-ester_cl"/>
</dbReference>
<dbReference type="InterPro" id="IPR011626">
    <property type="entry name" value="Alpha-macroglobulin_TED"/>
</dbReference>
<dbReference type="InterPro" id="IPR013783">
    <property type="entry name" value="Ig-like_fold"/>
</dbReference>
<dbReference type="InterPro" id="IPR014756">
    <property type="entry name" value="Ig_E-set"/>
</dbReference>
<dbReference type="InterPro" id="IPR001599">
    <property type="entry name" value="Macroglobln_a2"/>
</dbReference>
<dbReference type="InterPro" id="IPR002890">
    <property type="entry name" value="MG2"/>
</dbReference>
<dbReference type="InterPro" id="IPR041555">
    <property type="entry name" value="MG3"/>
</dbReference>
<dbReference type="InterPro" id="IPR040839">
    <property type="entry name" value="MG4"/>
</dbReference>
<dbReference type="InterPro" id="IPR008930">
    <property type="entry name" value="Terpenoid_cyclase/PrenylTrfase"/>
</dbReference>
<dbReference type="PANTHER" id="PTHR11412">
    <property type="entry name" value="MACROGLOBULIN / COMPLEMENT"/>
    <property type="match status" value="1"/>
</dbReference>
<dbReference type="PANTHER" id="PTHR11412:SF170">
    <property type="entry name" value="OVOSTATIN"/>
    <property type="match status" value="1"/>
</dbReference>
<dbReference type="Pfam" id="PF00207">
    <property type="entry name" value="A2M"/>
    <property type="match status" value="1"/>
</dbReference>
<dbReference type="Pfam" id="PF07703">
    <property type="entry name" value="A2M_BRD"/>
    <property type="match status" value="1"/>
</dbReference>
<dbReference type="Pfam" id="PF07677">
    <property type="entry name" value="A2M_recep"/>
    <property type="match status" value="1"/>
</dbReference>
<dbReference type="Pfam" id="PF01835">
    <property type="entry name" value="MG2"/>
    <property type="match status" value="1"/>
</dbReference>
<dbReference type="Pfam" id="PF17791">
    <property type="entry name" value="MG3"/>
    <property type="match status" value="1"/>
</dbReference>
<dbReference type="Pfam" id="PF17789">
    <property type="entry name" value="MG4"/>
    <property type="match status" value="1"/>
</dbReference>
<dbReference type="Pfam" id="PF07678">
    <property type="entry name" value="TED_complement"/>
    <property type="match status" value="1"/>
</dbReference>
<dbReference type="SMART" id="SM01360">
    <property type="entry name" value="A2M"/>
    <property type="match status" value="1"/>
</dbReference>
<dbReference type="SMART" id="SM01359">
    <property type="entry name" value="A2M_N_2"/>
    <property type="match status" value="1"/>
</dbReference>
<dbReference type="SMART" id="SM01361">
    <property type="entry name" value="A2M_recep"/>
    <property type="match status" value="1"/>
</dbReference>
<dbReference type="SMART" id="SM01419">
    <property type="entry name" value="Thiol-ester_cl"/>
    <property type="match status" value="1"/>
</dbReference>
<dbReference type="SUPFAM" id="SSF49410">
    <property type="entry name" value="Alpha-macroglobulin receptor domain"/>
    <property type="match status" value="1"/>
</dbReference>
<dbReference type="SUPFAM" id="SSF81296">
    <property type="entry name" value="E set domains"/>
    <property type="match status" value="1"/>
</dbReference>
<dbReference type="SUPFAM" id="SSF48239">
    <property type="entry name" value="Terpenoid cyclases/Protein prenyltransferases"/>
    <property type="match status" value="1"/>
</dbReference>
<protein>
    <recommendedName>
        <fullName>Ovostatin</fullName>
    </recommendedName>
    <alternativeName>
        <fullName>Ovomacroglobulin</fullName>
    </alternativeName>
</protein>
<name>OVOS_CHICK</name>